<dbReference type="EC" id="3.1.21.2" evidence="1"/>
<dbReference type="EMBL" id="CP000721">
    <property type="protein sequence ID" value="ABR32739.1"/>
    <property type="molecule type" value="Genomic_DNA"/>
</dbReference>
<dbReference type="RefSeq" id="WP_011967900.1">
    <property type="nucleotide sequence ID" value="NC_009617.1"/>
</dbReference>
<dbReference type="SMR" id="A6LQV9"/>
<dbReference type="KEGG" id="cbe:Cbei_0552"/>
<dbReference type="eggNOG" id="COG0648">
    <property type="taxonomic scope" value="Bacteria"/>
</dbReference>
<dbReference type="HOGENOM" id="CLU_025885_4_1_9"/>
<dbReference type="Proteomes" id="UP000000565">
    <property type="component" value="Chromosome"/>
</dbReference>
<dbReference type="GO" id="GO:0008833">
    <property type="term" value="F:deoxyribonuclease IV (phage-T4-induced) activity"/>
    <property type="evidence" value="ECO:0007669"/>
    <property type="project" value="UniProtKB-UniRule"/>
</dbReference>
<dbReference type="GO" id="GO:0003677">
    <property type="term" value="F:DNA binding"/>
    <property type="evidence" value="ECO:0007669"/>
    <property type="project" value="InterPro"/>
</dbReference>
<dbReference type="GO" id="GO:0003906">
    <property type="term" value="F:DNA-(apurinic or apyrimidinic site) endonuclease activity"/>
    <property type="evidence" value="ECO:0007669"/>
    <property type="project" value="TreeGrafter"/>
</dbReference>
<dbReference type="GO" id="GO:0008081">
    <property type="term" value="F:phosphoric diester hydrolase activity"/>
    <property type="evidence" value="ECO:0007669"/>
    <property type="project" value="TreeGrafter"/>
</dbReference>
<dbReference type="GO" id="GO:0008270">
    <property type="term" value="F:zinc ion binding"/>
    <property type="evidence" value="ECO:0007669"/>
    <property type="project" value="UniProtKB-UniRule"/>
</dbReference>
<dbReference type="GO" id="GO:0006284">
    <property type="term" value="P:base-excision repair"/>
    <property type="evidence" value="ECO:0007669"/>
    <property type="project" value="TreeGrafter"/>
</dbReference>
<dbReference type="CDD" id="cd00019">
    <property type="entry name" value="AP2Ec"/>
    <property type="match status" value="1"/>
</dbReference>
<dbReference type="FunFam" id="3.20.20.150:FF:000001">
    <property type="entry name" value="Probable endonuclease 4"/>
    <property type="match status" value="1"/>
</dbReference>
<dbReference type="Gene3D" id="3.20.20.150">
    <property type="entry name" value="Divalent-metal-dependent TIM barrel enzymes"/>
    <property type="match status" value="1"/>
</dbReference>
<dbReference type="HAMAP" id="MF_00152">
    <property type="entry name" value="Nfo"/>
    <property type="match status" value="1"/>
</dbReference>
<dbReference type="InterPro" id="IPR001719">
    <property type="entry name" value="AP_endonuc_2"/>
</dbReference>
<dbReference type="InterPro" id="IPR018246">
    <property type="entry name" value="AP_endonuc_F2_Zn_BS"/>
</dbReference>
<dbReference type="InterPro" id="IPR036237">
    <property type="entry name" value="Xyl_isomerase-like_sf"/>
</dbReference>
<dbReference type="InterPro" id="IPR013022">
    <property type="entry name" value="Xyl_isomerase-like_TIM-brl"/>
</dbReference>
<dbReference type="NCBIfam" id="TIGR00587">
    <property type="entry name" value="nfo"/>
    <property type="match status" value="1"/>
</dbReference>
<dbReference type="PANTHER" id="PTHR21445:SF0">
    <property type="entry name" value="APURINIC-APYRIMIDINIC ENDONUCLEASE"/>
    <property type="match status" value="1"/>
</dbReference>
<dbReference type="PANTHER" id="PTHR21445">
    <property type="entry name" value="ENDONUCLEASE IV ENDODEOXYRIBONUCLEASE IV"/>
    <property type="match status" value="1"/>
</dbReference>
<dbReference type="Pfam" id="PF01261">
    <property type="entry name" value="AP_endonuc_2"/>
    <property type="match status" value="1"/>
</dbReference>
<dbReference type="SMART" id="SM00518">
    <property type="entry name" value="AP2Ec"/>
    <property type="match status" value="1"/>
</dbReference>
<dbReference type="SUPFAM" id="SSF51658">
    <property type="entry name" value="Xylose isomerase-like"/>
    <property type="match status" value="1"/>
</dbReference>
<dbReference type="PROSITE" id="PS00730">
    <property type="entry name" value="AP_NUCLEASE_F2_2"/>
    <property type="match status" value="1"/>
</dbReference>
<dbReference type="PROSITE" id="PS00731">
    <property type="entry name" value="AP_NUCLEASE_F2_3"/>
    <property type="match status" value="1"/>
</dbReference>
<dbReference type="PROSITE" id="PS51432">
    <property type="entry name" value="AP_NUCLEASE_F2_4"/>
    <property type="match status" value="1"/>
</dbReference>
<proteinExistence type="inferred from homology"/>
<sequence>MLKIGCHLSASKGFKNMGEEAISIGGNTFQFFTRNPRGSKAKTIDETDIKEFLKLAEENNFSKILGHAPYTLNACSADENTRNFAVEIMKDDLERMEYIPNNLYNFHPGSHVKQGVEIGIKYISDMLNTVLKPEQTTTVLLETMAGKGTEIGRTFDELKEILNNVELSHKVGVCLDTCHVHDAGYDIVNNLDKVVEQFDKIIGLDKLCAIHLNDSMNPFGSHKDRHQKIGEGSIGLEGIKNIINHPMLCNLPFFLETPNELDGYAREIKLLKSIYQN</sequence>
<protein>
    <recommendedName>
        <fullName evidence="1">Probable endonuclease 4</fullName>
        <ecNumber evidence="1">3.1.21.2</ecNumber>
    </recommendedName>
    <alternativeName>
        <fullName evidence="1">Endodeoxyribonuclease IV</fullName>
    </alternativeName>
    <alternativeName>
        <fullName evidence="1">Endonuclease IV</fullName>
    </alternativeName>
</protein>
<feature type="chain" id="PRO_1000076802" description="Probable endonuclease 4">
    <location>
        <begin position="1"/>
        <end position="277"/>
    </location>
</feature>
<feature type="binding site" evidence="1">
    <location>
        <position position="67"/>
    </location>
    <ligand>
        <name>Zn(2+)</name>
        <dbReference type="ChEBI" id="CHEBI:29105"/>
        <label>1</label>
    </ligand>
</feature>
<feature type="binding site" evidence="1">
    <location>
        <position position="107"/>
    </location>
    <ligand>
        <name>Zn(2+)</name>
        <dbReference type="ChEBI" id="CHEBI:29105"/>
        <label>1</label>
    </ligand>
</feature>
<feature type="binding site" evidence="1">
    <location>
        <position position="142"/>
    </location>
    <ligand>
        <name>Zn(2+)</name>
        <dbReference type="ChEBI" id="CHEBI:29105"/>
        <label>1</label>
    </ligand>
</feature>
<feature type="binding site" evidence="1">
    <location>
        <position position="142"/>
    </location>
    <ligand>
        <name>Zn(2+)</name>
        <dbReference type="ChEBI" id="CHEBI:29105"/>
        <label>2</label>
    </ligand>
</feature>
<feature type="binding site" evidence="1">
    <location>
        <position position="176"/>
    </location>
    <ligand>
        <name>Zn(2+)</name>
        <dbReference type="ChEBI" id="CHEBI:29105"/>
        <label>2</label>
    </ligand>
</feature>
<feature type="binding site" evidence="1">
    <location>
        <position position="179"/>
    </location>
    <ligand>
        <name>Zn(2+)</name>
        <dbReference type="ChEBI" id="CHEBI:29105"/>
        <label>3</label>
    </ligand>
</feature>
<feature type="binding site" evidence="1">
    <location>
        <position position="211"/>
    </location>
    <ligand>
        <name>Zn(2+)</name>
        <dbReference type="ChEBI" id="CHEBI:29105"/>
        <label>2</label>
    </ligand>
</feature>
<feature type="binding site" evidence="1">
    <location>
        <position position="224"/>
    </location>
    <ligand>
        <name>Zn(2+)</name>
        <dbReference type="ChEBI" id="CHEBI:29105"/>
        <label>3</label>
    </ligand>
</feature>
<feature type="binding site" evidence="1">
    <location>
        <position position="226"/>
    </location>
    <ligand>
        <name>Zn(2+)</name>
        <dbReference type="ChEBI" id="CHEBI:29105"/>
        <label>3</label>
    </ligand>
</feature>
<feature type="binding site" evidence="1">
    <location>
        <position position="256"/>
    </location>
    <ligand>
        <name>Zn(2+)</name>
        <dbReference type="ChEBI" id="CHEBI:29105"/>
        <label>2</label>
    </ligand>
</feature>
<accession>A6LQV9</accession>
<comment type="function">
    <text evidence="1">Endonuclease IV plays a role in DNA repair. It cleaves phosphodiester bonds at apurinic or apyrimidinic (AP) sites, generating a 3'-hydroxyl group and a 5'-terminal sugar phosphate.</text>
</comment>
<comment type="catalytic activity">
    <reaction evidence="1">
        <text>Endonucleolytic cleavage to 5'-phosphooligonucleotide end-products.</text>
        <dbReference type="EC" id="3.1.21.2"/>
    </reaction>
</comment>
<comment type="cofactor">
    <cofactor evidence="1">
        <name>Zn(2+)</name>
        <dbReference type="ChEBI" id="CHEBI:29105"/>
    </cofactor>
    <text evidence="1">Binds 3 Zn(2+) ions.</text>
</comment>
<comment type="similarity">
    <text evidence="1">Belongs to the AP endonuclease 2 family.</text>
</comment>
<gene>
    <name evidence="1" type="primary">nfo</name>
    <name type="ordered locus">Cbei_0552</name>
</gene>
<reference key="1">
    <citation type="submission" date="2007-06" db="EMBL/GenBank/DDBJ databases">
        <title>Complete sequence of Clostridium beijerinckii NCIMB 8052.</title>
        <authorList>
            <consortium name="US DOE Joint Genome Institute"/>
            <person name="Copeland A."/>
            <person name="Lucas S."/>
            <person name="Lapidus A."/>
            <person name="Barry K."/>
            <person name="Detter J.C."/>
            <person name="Glavina del Rio T."/>
            <person name="Hammon N."/>
            <person name="Israni S."/>
            <person name="Dalin E."/>
            <person name="Tice H."/>
            <person name="Pitluck S."/>
            <person name="Sims D."/>
            <person name="Brettin T."/>
            <person name="Bruce D."/>
            <person name="Tapia R."/>
            <person name="Brainard J."/>
            <person name="Schmutz J."/>
            <person name="Larimer F."/>
            <person name="Land M."/>
            <person name="Hauser L."/>
            <person name="Kyrpides N."/>
            <person name="Mikhailova N."/>
            <person name="Bennet G."/>
            <person name="Cann I."/>
            <person name="Chen J.-S."/>
            <person name="Contreras A.L."/>
            <person name="Jones D."/>
            <person name="Kashket E."/>
            <person name="Mitchell W."/>
            <person name="Stoddard S."/>
            <person name="Schwarz W."/>
            <person name="Qureshi N."/>
            <person name="Young M."/>
            <person name="Shi Z."/>
            <person name="Ezeji T."/>
            <person name="White B."/>
            <person name="Blaschek H."/>
            <person name="Richardson P."/>
        </authorList>
    </citation>
    <scope>NUCLEOTIDE SEQUENCE [LARGE SCALE GENOMIC DNA]</scope>
    <source>
        <strain>ATCC 51743 / NCIMB 8052</strain>
    </source>
</reference>
<organism>
    <name type="scientific">Clostridium beijerinckii (strain ATCC 51743 / NCIMB 8052)</name>
    <name type="common">Clostridium acetobutylicum</name>
    <dbReference type="NCBI Taxonomy" id="290402"/>
    <lineage>
        <taxon>Bacteria</taxon>
        <taxon>Bacillati</taxon>
        <taxon>Bacillota</taxon>
        <taxon>Clostridia</taxon>
        <taxon>Eubacteriales</taxon>
        <taxon>Clostridiaceae</taxon>
        <taxon>Clostridium</taxon>
    </lineage>
</organism>
<name>END4_CLOB8</name>
<evidence type="ECO:0000255" key="1">
    <source>
        <dbReference type="HAMAP-Rule" id="MF_00152"/>
    </source>
</evidence>
<keyword id="KW-0227">DNA damage</keyword>
<keyword id="KW-0234">DNA repair</keyword>
<keyword id="KW-0255">Endonuclease</keyword>
<keyword id="KW-0378">Hydrolase</keyword>
<keyword id="KW-0479">Metal-binding</keyword>
<keyword id="KW-0540">Nuclease</keyword>
<keyword id="KW-0862">Zinc</keyword>